<dbReference type="EC" id="2.7.11.1"/>
<dbReference type="EMBL" id="AY653733">
    <property type="protein sequence ID" value="AAV50781.1"/>
    <property type="status" value="ALT_SEQ"/>
    <property type="molecule type" value="Genomic_DNA"/>
</dbReference>
<dbReference type="EMBL" id="AY653733">
    <property type="protein sequence ID" value="AAV50782.1"/>
    <property type="status" value="ALT_SEQ"/>
    <property type="molecule type" value="Genomic_DNA"/>
</dbReference>
<dbReference type="SMR" id="Q5UQ78"/>
<dbReference type="KEGG" id="vg:9925150"/>
<dbReference type="OrthoDB" id="8955at10239"/>
<dbReference type="Proteomes" id="UP000001134">
    <property type="component" value="Genome"/>
</dbReference>
<dbReference type="GO" id="GO:0005524">
    <property type="term" value="F:ATP binding"/>
    <property type="evidence" value="ECO:0007669"/>
    <property type="project" value="UniProtKB-KW"/>
</dbReference>
<dbReference type="GO" id="GO:0106310">
    <property type="term" value="F:protein serine kinase activity"/>
    <property type="evidence" value="ECO:0007669"/>
    <property type="project" value="RHEA"/>
</dbReference>
<dbReference type="GO" id="GO:0004674">
    <property type="term" value="F:protein serine/threonine kinase activity"/>
    <property type="evidence" value="ECO:0007669"/>
    <property type="project" value="UniProtKB-KW"/>
</dbReference>
<dbReference type="GO" id="GO:0010506">
    <property type="term" value="P:regulation of autophagy"/>
    <property type="evidence" value="ECO:0007669"/>
    <property type="project" value="InterPro"/>
</dbReference>
<dbReference type="FunFam" id="1.10.510.10:FF:000571">
    <property type="entry name" value="Maternal embryonic leucine zipper kinase"/>
    <property type="match status" value="1"/>
</dbReference>
<dbReference type="Gene3D" id="1.10.510.10">
    <property type="entry name" value="Transferase(Phosphotransferase) domain 1"/>
    <property type="match status" value="1"/>
</dbReference>
<dbReference type="InterPro" id="IPR045269">
    <property type="entry name" value="Atg1-like"/>
</dbReference>
<dbReference type="InterPro" id="IPR011009">
    <property type="entry name" value="Kinase-like_dom_sf"/>
</dbReference>
<dbReference type="InterPro" id="IPR000719">
    <property type="entry name" value="Prot_kinase_dom"/>
</dbReference>
<dbReference type="InterPro" id="IPR017441">
    <property type="entry name" value="Protein_kinase_ATP_BS"/>
</dbReference>
<dbReference type="InterPro" id="IPR008271">
    <property type="entry name" value="Ser/Thr_kinase_AS"/>
</dbReference>
<dbReference type="PANTHER" id="PTHR24348:SF70">
    <property type="entry name" value="PROTEIN KINASE DOMAIN CONTAINING PROTEIN"/>
    <property type="match status" value="1"/>
</dbReference>
<dbReference type="PANTHER" id="PTHR24348">
    <property type="entry name" value="SERINE/THREONINE-PROTEIN KINASE UNC-51-RELATED"/>
    <property type="match status" value="1"/>
</dbReference>
<dbReference type="Pfam" id="PF00069">
    <property type="entry name" value="Pkinase"/>
    <property type="match status" value="1"/>
</dbReference>
<dbReference type="SMART" id="SM00220">
    <property type="entry name" value="S_TKc"/>
    <property type="match status" value="1"/>
</dbReference>
<dbReference type="SUPFAM" id="SSF56112">
    <property type="entry name" value="Protein kinase-like (PK-like)"/>
    <property type="match status" value="1"/>
</dbReference>
<dbReference type="PROSITE" id="PS00107">
    <property type="entry name" value="PROTEIN_KINASE_ATP"/>
    <property type="match status" value="1"/>
</dbReference>
<dbReference type="PROSITE" id="PS50011">
    <property type="entry name" value="PROTEIN_KINASE_DOM"/>
    <property type="match status" value="1"/>
</dbReference>
<dbReference type="PROSITE" id="PS00108">
    <property type="entry name" value="PROTEIN_KINASE_ST"/>
    <property type="match status" value="1"/>
</dbReference>
<organism>
    <name type="scientific">Acanthamoeba polyphaga mimivirus</name>
    <name type="common">APMV</name>
    <dbReference type="NCBI Taxonomy" id="212035"/>
    <lineage>
        <taxon>Viruses</taxon>
        <taxon>Varidnaviria</taxon>
        <taxon>Bamfordvirae</taxon>
        <taxon>Nucleocytoviricota</taxon>
        <taxon>Megaviricetes</taxon>
        <taxon>Imitervirales</taxon>
        <taxon>Mimiviridae</taxon>
        <taxon>Megamimivirinae</taxon>
        <taxon>Mimivirus</taxon>
        <taxon>Mimivirus bradfordmassiliense</taxon>
    </lineage>
</organism>
<evidence type="ECO:0000255" key="1">
    <source>
        <dbReference type="PROSITE-ProRule" id="PRU00159"/>
    </source>
</evidence>
<evidence type="ECO:0000255" key="2">
    <source>
        <dbReference type="PROSITE-ProRule" id="PRU10027"/>
    </source>
</evidence>
<evidence type="ECO:0000305" key="3"/>
<reference key="1">
    <citation type="journal article" date="2004" name="Science">
        <title>The 1.2-megabase genome sequence of Mimivirus.</title>
        <authorList>
            <person name="Raoult D."/>
            <person name="Audic S."/>
            <person name="Robert C."/>
            <person name="Abergel C."/>
            <person name="Renesto P."/>
            <person name="Ogata H."/>
            <person name="La Scola B."/>
            <person name="Susan M."/>
            <person name="Claverie J.-M."/>
        </authorList>
    </citation>
    <scope>NUCLEOTIDE SEQUENCE [LARGE SCALE GENOMIC DNA]</scope>
    <source>
        <strain>Rowbotham-Bradford</strain>
    </source>
</reference>
<reference key="2">
    <citation type="submission" date="2007-09" db="UniProtKB">
        <authorList>
            <person name="Audic S."/>
        </authorList>
    </citation>
    <scope>SEQUENCE REVISION</scope>
</reference>
<sequence length="450" mass="51879">MEIINSRYKMTDTVLGKGGFSEVFLGTDMYTDNKVAIKKINITGKNSSDIKFLNKLDFEIRTMQILNHPNIVAYYDVMKTENYWYIVMEYCNFGTLNDVIKFNKNKGISSLDLEKNTHYYLNQLRDALNYIINMGYIHRDIKPMNILLTKSISENNENNENTNYDRSNSLILKLADFGLTKKCSENEEDIMNTICGSPLYMAPELFFNQHYNSQSDIWSFGIIMYQLLFHDHPINATNYSQLKNGLKNQKINFPKNNMFSNYCFDLLSKTLAKDPKNRLNWSELFHHYWFIHWSEQHCPKNKSDDSNNKKIPDKSQFNEILSSTKSPLISLRQFGQLGQSNLSKFKNNGAINCSIDFPKYTNNFPSAVNQSIKIGLSGSSSPINIPVRNNSSKKINYDDIELISNGNIFPETLYGSISPVDSIINKETRNKTNNPSSLNLSEFVLSDYEI</sequence>
<gene>
    <name type="ordered locus">MIMI_R517</name>
    <name type="ordered locus">MIMI_R518</name>
</gene>
<name>YR517_MIMIV</name>
<proteinExistence type="inferred from homology"/>
<accession>Q5UQ78</accession>
<accession>Q5UQ77</accession>
<protein>
    <recommendedName>
        <fullName>Putative serine/threonine-protein kinase R517/R518</fullName>
        <ecNumber>2.7.11.1</ecNumber>
    </recommendedName>
</protein>
<comment type="catalytic activity">
    <reaction>
        <text>L-seryl-[protein] + ATP = O-phospho-L-seryl-[protein] + ADP + H(+)</text>
        <dbReference type="Rhea" id="RHEA:17989"/>
        <dbReference type="Rhea" id="RHEA-COMP:9863"/>
        <dbReference type="Rhea" id="RHEA-COMP:11604"/>
        <dbReference type="ChEBI" id="CHEBI:15378"/>
        <dbReference type="ChEBI" id="CHEBI:29999"/>
        <dbReference type="ChEBI" id="CHEBI:30616"/>
        <dbReference type="ChEBI" id="CHEBI:83421"/>
        <dbReference type="ChEBI" id="CHEBI:456216"/>
        <dbReference type="EC" id="2.7.11.1"/>
    </reaction>
</comment>
<comment type="catalytic activity">
    <reaction>
        <text>L-threonyl-[protein] + ATP = O-phospho-L-threonyl-[protein] + ADP + H(+)</text>
        <dbReference type="Rhea" id="RHEA:46608"/>
        <dbReference type="Rhea" id="RHEA-COMP:11060"/>
        <dbReference type="Rhea" id="RHEA-COMP:11605"/>
        <dbReference type="ChEBI" id="CHEBI:15378"/>
        <dbReference type="ChEBI" id="CHEBI:30013"/>
        <dbReference type="ChEBI" id="CHEBI:30616"/>
        <dbReference type="ChEBI" id="CHEBI:61977"/>
        <dbReference type="ChEBI" id="CHEBI:456216"/>
        <dbReference type="EC" id="2.7.11.1"/>
    </reaction>
</comment>
<comment type="similarity">
    <text evidence="1">Belongs to the protein kinase superfamily. Ser/Thr protein kinase family.</text>
</comment>
<comment type="sequence caution" evidence="3">
    <conflict type="frameshift">
        <sequence resource="EMBL-CDS" id="AAV50781"/>
    </conflict>
</comment>
<comment type="sequence caution" evidence="3">
    <conflict type="frameshift">
        <sequence resource="EMBL-CDS" id="AAV50782"/>
    </conflict>
</comment>
<organismHost>
    <name type="scientific">Acanthamoeba polyphaga</name>
    <name type="common">Amoeba</name>
    <dbReference type="NCBI Taxonomy" id="5757"/>
</organismHost>
<feature type="chain" id="PRO_0000253439" description="Putative serine/threonine-protein kinase R517/R518">
    <location>
        <begin position="1"/>
        <end position="450"/>
    </location>
</feature>
<feature type="domain" description="Protein kinase" evidence="1">
    <location>
        <begin position="9"/>
        <end position="290"/>
    </location>
</feature>
<feature type="active site" description="Proton acceptor" evidence="1 2">
    <location>
        <position position="140"/>
    </location>
</feature>
<feature type="binding site" evidence="1">
    <location>
        <begin position="15"/>
        <end position="23"/>
    </location>
    <ligand>
        <name>ATP</name>
        <dbReference type="ChEBI" id="CHEBI:30616"/>
    </ligand>
</feature>
<feature type="binding site" evidence="1">
    <location>
        <position position="38"/>
    </location>
    <ligand>
        <name>ATP</name>
        <dbReference type="ChEBI" id="CHEBI:30616"/>
    </ligand>
</feature>
<keyword id="KW-0067">ATP-binding</keyword>
<keyword id="KW-0418">Kinase</keyword>
<keyword id="KW-0547">Nucleotide-binding</keyword>
<keyword id="KW-1185">Reference proteome</keyword>
<keyword id="KW-0723">Serine/threonine-protein kinase</keyword>
<keyword id="KW-0808">Transferase</keyword>